<comment type="function">
    <text evidence="1">With S4 and S12 plays an important role in translational accuracy.</text>
</comment>
<comment type="function">
    <text evidence="1">Located at the back of the 30S subunit body where it stabilizes the conformation of the head with respect to the body.</text>
</comment>
<comment type="subunit">
    <text evidence="1">Part of the 30S ribosomal subunit. Contacts proteins S4 and S8.</text>
</comment>
<comment type="domain">
    <text>The N-terminal domain interacts with the head of the 30S subunit; the C-terminal domain interacts with the body and contacts protein S4. The interaction surface between S4 and S5 is involved in control of translational fidelity.</text>
</comment>
<comment type="similarity">
    <text evidence="1">Belongs to the universal ribosomal protein uS5 family.</text>
</comment>
<proteinExistence type="inferred from homology"/>
<gene>
    <name evidence="1" type="primary">rpsE</name>
    <name evidence="1" type="synonym">rps5</name>
    <name type="ordered locus">SYNW2083</name>
</gene>
<sequence length="215" mass="22702">MTDSSPQSNPNAVPGAADVPAAAEGQQQEQRRGGGRGERGDRRGGRRGDRRNQERDSEWQERVVQIRRVSKTVKGGKKMSFRAIVVVGNEKGQVGVGVGKAGDVIGAVRKGVADGKKHLVKVPLTRHNSIPTLSNGRDGAASVLIRPAAPGTGVIAGGSIRTVLELAGIKNVLAKRLGSKTPLNNARAAMVALSLLRTHKETAKERGISLEQIYS</sequence>
<name>RS5_PARMW</name>
<accession>Q7U4I4</accession>
<dbReference type="EMBL" id="BX569694">
    <property type="protein sequence ID" value="CAE08598.1"/>
    <property type="molecule type" value="Genomic_DNA"/>
</dbReference>
<dbReference type="RefSeq" id="WP_011128941.1">
    <property type="nucleotide sequence ID" value="NC_005070.1"/>
</dbReference>
<dbReference type="SMR" id="Q7U4I4"/>
<dbReference type="STRING" id="84588.SYNW2083"/>
<dbReference type="KEGG" id="syw:SYNW2083"/>
<dbReference type="eggNOG" id="COG0098">
    <property type="taxonomic scope" value="Bacteria"/>
</dbReference>
<dbReference type="HOGENOM" id="CLU_065898_2_1_3"/>
<dbReference type="Proteomes" id="UP000001422">
    <property type="component" value="Chromosome"/>
</dbReference>
<dbReference type="GO" id="GO:0015935">
    <property type="term" value="C:small ribosomal subunit"/>
    <property type="evidence" value="ECO:0007669"/>
    <property type="project" value="InterPro"/>
</dbReference>
<dbReference type="GO" id="GO:0019843">
    <property type="term" value="F:rRNA binding"/>
    <property type="evidence" value="ECO:0007669"/>
    <property type="project" value="UniProtKB-UniRule"/>
</dbReference>
<dbReference type="GO" id="GO:0003735">
    <property type="term" value="F:structural constituent of ribosome"/>
    <property type="evidence" value="ECO:0007669"/>
    <property type="project" value="InterPro"/>
</dbReference>
<dbReference type="GO" id="GO:0006412">
    <property type="term" value="P:translation"/>
    <property type="evidence" value="ECO:0007669"/>
    <property type="project" value="UniProtKB-UniRule"/>
</dbReference>
<dbReference type="FunFam" id="3.30.160.20:FF:000001">
    <property type="entry name" value="30S ribosomal protein S5"/>
    <property type="match status" value="1"/>
</dbReference>
<dbReference type="FunFam" id="3.30.230.10:FF:000002">
    <property type="entry name" value="30S ribosomal protein S5"/>
    <property type="match status" value="1"/>
</dbReference>
<dbReference type="Gene3D" id="3.30.160.20">
    <property type="match status" value="1"/>
</dbReference>
<dbReference type="Gene3D" id="3.30.230.10">
    <property type="match status" value="1"/>
</dbReference>
<dbReference type="HAMAP" id="MF_01307_B">
    <property type="entry name" value="Ribosomal_uS5_B"/>
    <property type="match status" value="1"/>
</dbReference>
<dbReference type="InterPro" id="IPR020568">
    <property type="entry name" value="Ribosomal_Su5_D2-typ_SF"/>
</dbReference>
<dbReference type="InterPro" id="IPR000851">
    <property type="entry name" value="Ribosomal_uS5"/>
</dbReference>
<dbReference type="InterPro" id="IPR005712">
    <property type="entry name" value="Ribosomal_uS5_bac-type"/>
</dbReference>
<dbReference type="InterPro" id="IPR005324">
    <property type="entry name" value="Ribosomal_uS5_C"/>
</dbReference>
<dbReference type="InterPro" id="IPR013810">
    <property type="entry name" value="Ribosomal_uS5_N"/>
</dbReference>
<dbReference type="InterPro" id="IPR018192">
    <property type="entry name" value="Ribosomal_uS5_N_CS"/>
</dbReference>
<dbReference type="InterPro" id="IPR014721">
    <property type="entry name" value="Ribsml_uS5_D2-typ_fold_subgr"/>
</dbReference>
<dbReference type="NCBIfam" id="TIGR01021">
    <property type="entry name" value="rpsE_bact"/>
    <property type="match status" value="1"/>
</dbReference>
<dbReference type="PANTHER" id="PTHR48277">
    <property type="entry name" value="MITOCHONDRIAL RIBOSOMAL PROTEIN S5"/>
    <property type="match status" value="1"/>
</dbReference>
<dbReference type="PANTHER" id="PTHR48277:SF1">
    <property type="entry name" value="MITOCHONDRIAL RIBOSOMAL PROTEIN S5"/>
    <property type="match status" value="1"/>
</dbReference>
<dbReference type="Pfam" id="PF00333">
    <property type="entry name" value="Ribosomal_S5"/>
    <property type="match status" value="1"/>
</dbReference>
<dbReference type="Pfam" id="PF03719">
    <property type="entry name" value="Ribosomal_S5_C"/>
    <property type="match status" value="1"/>
</dbReference>
<dbReference type="SUPFAM" id="SSF54768">
    <property type="entry name" value="dsRNA-binding domain-like"/>
    <property type="match status" value="1"/>
</dbReference>
<dbReference type="SUPFAM" id="SSF54211">
    <property type="entry name" value="Ribosomal protein S5 domain 2-like"/>
    <property type="match status" value="1"/>
</dbReference>
<dbReference type="PROSITE" id="PS00585">
    <property type="entry name" value="RIBOSOMAL_S5"/>
    <property type="match status" value="1"/>
</dbReference>
<dbReference type="PROSITE" id="PS50881">
    <property type="entry name" value="S5_DSRBD"/>
    <property type="match status" value="1"/>
</dbReference>
<protein>
    <recommendedName>
        <fullName evidence="1">Small ribosomal subunit protein uS5</fullName>
    </recommendedName>
    <alternativeName>
        <fullName evidence="3">30S ribosomal protein S5</fullName>
    </alternativeName>
</protein>
<reference key="1">
    <citation type="journal article" date="2003" name="Nature">
        <title>The genome of a motile marine Synechococcus.</title>
        <authorList>
            <person name="Palenik B."/>
            <person name="Brahamsha B."/>
            <person name="Larimer F.W."/>
            <person name="Land M.L."/>
            <person name="Hauser L."/>
            <person name="Chain P."/>
            <person name="Lamerdin J.E."/>
            <person name="Regala W."/>
            <person name="Allen E.E."/>
            <person name="McCarren J."/>
            <person name="Paulsen I.T."/>
            <person name="Dufresne A."/>
            <person name="Partensky F."/>
            <person name="Webb E.A."/>
            <person name="Waterbury J."/>
        </authorList>
    </citation>
    <scope>NUCLEOTIDE SEQUENCE [LARGE SCALE GENOMIC DNA]</scope>
    <source>
        <strain>WH8102</strain>
    </source>
</reference>
<feature type="chain" id="PRO_0000131617" description="Small ribosomal subunit protein uS5">
    <location>
        <begin position="1"/>
        <end position="215"/>
    </location>
</feature>
<feature type="domain" description="S5 DRBM" evidence="1">
    <location>
        <begin position="59"/>
        <end position="122"/>
    </location>
</feature>
<feature type="region of interest" description="Disordered" evidence="2">
    <location>
        <begin position="1"/>
        <end position="62"/>
    </location>
</feature>
<feature type="compositionally biased region" description="Low complexity" evidence="2">
    <location>
        <begin position="9"/>
        <end position="28"/>
    </location>
</feature>
<feature type="compositionally biased region" description="Basic and acidic residues" evidence="2">
    <location>
        <begin position="29"/>
        <end position="61"/>
    </location>
</feature>
<organism>
    <name type="scientific">Parasynechococcus marenigrum (strain WH8102)</name>
    <dbReference type="NCBI Taxonomy" id="84588"/>
    <lineage>
        <taxon>Bacteria</taxon>
        <taxon>Bacillati</taxon>
        <taxon>Cyanobacteriota</taxon>
        <taxon>Cyanophyceae</taxon>
        <taxon>Synechococcales</taxon>
        <taxon>Prochlorococcaceae</taxon>
        <taxon>Parasynechococcus</taxon>
        <taxon>Parasynechococcus marenigrum</taxon>
    </lineage>
</organism>
<evidence type="ECO:0000255" key="1">
    <source>
        <dbReference type="HAMAP-Rule" id="MF_01307"/>
    </source>
</evidence>
<evidence type="ECO:0000256" key="2">
    <source>
        <dbReference type="SAM" id="MobiDB-lite"/>
    </source>
</evidence>
<evidence type="ECO:0000305" key="3"/>
<keyword id="KW-0687">Ribonucleoprotein</keyword>
<keyword id="KW-0689">Ribosomal protein</keyword>
<keyword id="KW-0694">RNA-binding</keyword>
<keyword id="KW-0699">rRNA-binding</keyword>